<comment type="function">
    <text evidence="3 4 6">Virulence factor that suppresses host Toll-like receptor (TLR)-mediated cytokine production upon infection, thereby increasing bacterial burden in the urinary tract and promoting renal tissue damage (PubMed:18327267, PubMed:20886104). Acts as a NAD(+) hydrolase (NADase) by catalyzing cleavage of NAD(+) into ADP-D-ribose (ADPR) and nicotinamide (PubMed:29395922). Also able to hydrolyze NADP(+), but not other NAD(+)-related molecules (PubMed:29395922).</text>
</comment>
<comment type="catalytic activity">
    <reaction evidence="6">
        <text>NAD(+) + H2O = ADP-D-ribose + nicotinamide + H(+)</text>
        <dbReference type="Rhea" id="RHEA:16301"/>
        <dbReference type="ChEBI" id="CHEBI:15377"/>
        <dbReference type="ChEBI" id="CHEBI:15378"/>
        <dbReference type="ChEBI" id="CHEBI:17154"/>
        <dbReference type="ChEBI" id="CHEBI:57540"/>
        <dbReference type="ChEBI" id="CHEBI:57967"/>
        <dbReference type="EC" id="3.2.2.6"/>
    </reaction>
    <physiologicalReaction direction="left-to-right" evidence="6">
        <dbReference type="Rhea" id="RHEA:16302"/>
    </physiologicalReaction>
</comment>
<comment type="catalytic activity">
    <reaction evidence="6">
        <text>NADP(+) + H2O = ADP-D-ribose 2'-phosphate + nicotinamide + H(+)</text>
        <dbReference type="Rhea" id="RHEA:19849"/>
        <dbReference type="ChEBI" id="CHEBI:15377"/>
        <dbReference type="ChEBI" id="CHEBI:15378"/>
        <dbReference type="ChEBI" id="CHEBI:17154"/>
        <dbReference type="ChEBI" id="CHEBI:58349"/>
        <dbReference type="ChEBI" id="CHEBI:58673"/>
    </reaction>
    <physiologicalReaction direction="left-to-right" evidence="6">
        <dbReference type="Rhea" id="RHEA:19850"/>
    </physiologicalReaction>
</comment>
<comment type="biophysicochemical properties">
    <kinetics>
        <KM evidence="6">196 uM for NAD(+)</KM>
    </kinetics>
</comment>
<comment type="subunit">
    <text evidence="3 5">Interacts with host MYD88 (PubMed:18327267, PubMed:23569230). Interacts with host TLR4 (PubMed:23569230).</text>
</comment>
<comment type="subcellular location">
    <subcellularLocation>
        <location evidence="3">Secreted</location>
    </subcellularLocation>
    <subcellularLocation>
        <location evidence="1">Membrane</location>
        <topology evidence="1">Single-pass membrane protein</topology>
    </subcellularLocation>
</comment>
<comment type="domain">
    <text evidence="2">The TIR domain mediates NAD(+) hydrolase (NADase) activity. Self-association of TIR domains is required for NADase activity.</text>
</comment>
<gene>
    <name evidence="7" type="primary">TcpC</name>
    <name evidence="10" type="ordered locus">c2398</name>
</gene>
<keyword id="KW-0378">Hydrolase</keyword>
<keyword id="KW-0472">Membrane</keyword>
<keyword id="KW-0520">NAD</keyword>
<keyword id="KW-1185">Reference proteome</keyword>
<keyword id="KW-0964">Secreted</keyword>
<keyword id="KW-0812">Transmembrane</keyword>
<keyword id="KW-1133">Transmembrane helix</keyword>
<keyword id="KW-0843">Virulence</keyword>
<reference key="1">
    <citation type="journal article" date="2002" name="Proc. Natl. Acad. Sci. U.S.A.">
        <title>Extensive mosaic structure revealed by the complete genome sequence of uropathogenic Escherichia coli.</title>
        <authorList>
            <person name="Welch R.A."/>
            <person name="Burland V."/>
            <person name="Plunkett G. III"/>
            <person name="Redford P."/>
            <person name="Roesch P."/>
            <person name="Rasko D."/>
            <person name="Buckles E.L."/>
            <person name="Liou S.-R."/>
            <person name="Boutin A."/>
            <person name="Hackett J."/>
            <person name="Stroud D."/>
            <person name="Mayhew G.F."/>
            <person name="Rose D.J."/>
            <person name="Zhou S."/>
            <person name="Schwartz D.C."/>
            <person name="Perna N.T."/>
            <person name="Mobley H.L.T."/>
            <person name="Donnenberg M.S."/>
            <person name="Blattner F.R."/>
        </authorList>
    </citation>
    <scope>NUCLEOTIDE SEQUENCE [LARGE SCALE GENOMIC DNA]</scope>
    <source>
        <strain>CFT073 / ATCC 700928 / UPEC</strain>
    </source>
</reference>
<reference key="2">
    <citation type="journal article" date="2008" name="Nat. Med.">
        <title>Subversion of Toll-like receptor signaling by a unique family of bacterial Toll/interleukin-1 receptor domain-containing proteins.</title>
        <authorList>
            <person name="Cirl C."/>
            <person name="Wieser A."/>
            <person name="Yadav M."/>
            <person name="Duerr S."/>
            <person name="Schubert S."/>
            <person name="Fischer H."/>
            <person name="Stappert D."/>
            <person name="Wantia N."/>
            <person name="Rodriguez N."/>
            <person name="Wagner H."/>
            <person name="Svanborg C."/>
            <person name="Miethke T."/>
        </authorList>
    </citation>
    <scope>FUNCTION</scope>
    <scope>SUBCELLULAR LOCATION</scope>
    <scope>INTERACTION WITH HOST MYD88</scope>
</reference>
<reference key="3">
    <citation type="journal article" date="2010" name="PLoS Pathog.">
        <title>Inhibition of TIR domain signaling by TcpC: MyD88-dependent and independent effects on Escherichia coli virulence.</title>
        <authorList>
            <person name="Yadav M."/>
            <person name="Zhang J."/>
            <person name="Fischer H."/>
            <person name="Huang W."/>
            <person name="Lutay N."/>
            <person name="Cirl C."/>
            <person name="Lum J."/>
            <person name="Miethke T."/>
            <person name="Svanborg C."/>
        </authorList>
    </citation>
    <scope>FUNCTION</scope>
</reference>
<reference key="4">
    <citation type="journal article" date="2013" name="Proc. Natl. Acad. Sci. U.S.A.">
        <title>Molecular mechanisms for the subversion of MyD88 signaling by TcpC from virulent uropathogenic Escherichia coli.</title>
        <authorList>
            <person name="Snyder G.A."/>
            <person name="Cirl C."/>
            <person name="Jiang J."/>
            <person name="Chen K."/>
            <person name="Waldhuber A."/>
            <person name="Smith P."/>
            <person name="Roemmler F."/>
            <person name="Snyder N."/>
            <person name="Fresquez T."/>
            <person name="Duerr S."/>
            <person name="Tjandra N."/>
            <person name="Miethke T."/>
            <person name="Xiao T.S."/>
        </authorList>
    </citation>
    <scope>INTERACTION WITH HOST MYD88 AND TLR4</scope>
    <scope>MUTAGENESIS OF 272-VAL--TYR-275</scope>
</reference>
<reference key="5">
    <citation type="journal article" date="2018" name="Curr. Biol.">
        <title>TIR domain proteins are an ancient family of NAD+-consuming enzymes.</title>
        <authorList>
            <person name="Essuman K."/>
            <person name="Summers D.W."/>
            <person name="Sasaki Y."/>
            <person name="Mao X."/>
            <person name="Yim A.K.Y."/>
            <person name="DiAntonio A."/>
            <person name="Milbrandt J."/>
        </authorList>
    </citation>
    <scope>FUNCTION</scope>
    <scope>CATALYTIC ACTIVITY</scope>
    <scope>BIOPHYSICOCHEMICAL PROPERTIES</scope>
    <scope>MUTAGENESIS OF GLU-244</scope>
    <scope>ACTIVE SITE</scope>
</reference>
<accession>A0A0H2V8B5</accession>
<dbReference type="EC" id="3.2.2.6" evidence="6"/>
<dbReference type="EC" id="3.2.2.-" evidence="6"/>
<dbReference type="EMBL" id="AE014075">
    <property type="protein sequence ID" value="AAN80857.1"/>
    <property type="molecule type" value="Genomic_DNA"/>
</dbReference>
<dbReference type="SMR" id="A0A0H2V8B5"/>
<dbReference type="STRING" id="199310.c2398"/>
<dbReference type="KEGG" id="ecc:c2398"/>
<dbReference type="eggNOG" id="COG4916">
    <property type="taxonomic scope" value="Bacteria"/>
</dbReference>
<dbReference type="HOGENOM" id="CLU_078739_0_0_6"/>
<dbReference type="Proteomes" id="UP000001410">
    <property type="component" value="Chromosome"/>
</dbReference>
<dbReference type="GO" id="GO:0005576">
    <property type="term" value="C:extracellular region"/>
    <property type="evidence" value="ECO:0007669"/>
    <property type="project" value="UniProtKB-SubCell"/>
</dbReference>
<dbReference type="GO" id="GO:0016020">
    <property type="term" value="C:membrane"/>
    <property type="evidence" value="ECO:0007669"/>
    <property type="project" value="UniProtKB-SubCell"/>
</dbReference>
<dbReference type="GO" id="GO:0003953">
    <property type="term" value="F:NAD+ nucleosidase activity"/>
    <property type="evidence" value="ECO:0000314"/>
    <property type="project" value="UniProtKB"/>
</dbReference>
<dbReference type="GO" id="GO:0061809">
    <property type="term" value="F:NAD+ nucleosidase activity, cyclic ADP-ribose generating"/>
    <property type="evidence" value="ECO:0007669"/>
    <property type="project" value="UniProtKB-EC"/>
</dbReference>
<dbReference type="GO" id="GO:0050135">
    <property type="term" value="F:NADP+ nucleosidase activity"/>
    <property type="evidence" value="ECO:0000314"/>
    <property type="project" value="UniProtKB"/>
</dbReference>
<dbReference type="GO" id="GO:0019677">
    <property type="term" value="P:NAD catabolic process"/>
    <property type="evidence" value="ECO:0000314"/>
    <property type="project" value="UniProtKB"/>
</dbReference>
<dbReference type="GO" id="GO:0034125">
    <property type="term" value="P:negative regulation of MyD88-dependent toll-like receptor signaling pathway"/>
    <property type="evidence" value="ECO:0000314"/>
    <property type="project" value="UniProtKB"/>
</dbReference>
<dbReference type="GO" id="GO:0007165">
    <property type="term" value="P:signal transduction"/>
    <property type="evidence" value="ECO:0007669"/>
    <property type="project" value="InterPro"/>
</dbReference>
<dbReference type="Gene3D" id="3.40.50.10140">
    <property type="entry name" value="Toll/interleukin-1 receptor homology (TIR) domain"/>
    <property type="match status" value="1"/>
</dbReference>
<dbReference type="InterPro" id="IPR000157">
    <property type="entry name" value="TIR_dom"/>
</dbReference>
<dbReference type="InterPro" id="IPR035897">
    <property type="entry name" value="Toll_tir_struct_dom_sf"/>
</dbReference>
<dbReference type="Pfam" id="PF13676">
    <property type="entry name" value="TIR_2"/>
    <property type="match status" value="1"/>
</dbReference>
<dbReference type="SMART" id="SM00255">
    <property type="entry name" value="TIR"/>
    <property type="match status" value="1"/>
</dbReference>
<dbReference type="SUPFAM" id="SSF52200">
    <property type="entry name" value="Toll/Interleukin receptor TIR domain"/>
    <property type="match status" value="1"/>
</dbReference>
<dbReference type="PROSITE" id="PS50104">
    <property type="entry name" value="TIR"/>
    <property type="match status" value="1"/>
</dbReference>
<protein>
    <recommendedName>
        <fullName evidence="8">NAD(+) hydrolase TcpC</fullName>
        <ecNumber evidence="6">3.2.2.6</ecNumber>
    </recommendedName>
    <alternativeName>
        <fullName evidence="8">NADP(+) hydrolase TcpC</fullName>
        <ecNumber evidence="6">3.2.2.-</ecNumber>
    </alternativeName>
    <alternativeName>
        <fullName evidence="7">TIR domain-containing protein in E.coli</fullName>
        <shortName evidence="7">tcpC</shortName>
    </alternativeName>
</protein>
<sequence>MIAYENIEFFICLVNVLGNNMYNILFFIFLSIAIPFLLFLAWKQHLKTKEIRSYLLKEGYNIIFNGEGNSYLAFNISNATFRAGNLTSNDYFQASISYIHDYRWEWKEVEAKKINNIFIIYISNIDFPSQKLFYRNNKSLAEIDWAKLQAIFHQPYEIQNDVMQDNNNTHYDFFISHAKEDKDTFVRPLVDELNRLGVIIWYDEQTLEVGDSLRRNIDLGLRKANYGIVILSHNFLNKKWTQYELDSLINRAVYDDNKIILPIWHNINAQEVSKYSHYLADKMALQTSLYSVKEIARELAEIAYRRR</sequence>
<proteinExistence type="evidence at protein level"/>
<name>TCPC_ECOL6</name>
<feature type="chain" id="PRO_0000449143" description="NAD(+) hydrolase TcpC">
    <location>
        <begin position="1"/>
        <end position="307"/>
    </location>
</feature>
<feature type="transmembrane region" description="Helical" evidence="1">
    <location>
        <begin position="22"/>
        <end position="42"/>
    </location>
</feature>
<feature type="domain" description="TIR" evidence="2">
    <location>
        <begin position="169"/>
        <end position="303"/>
    </location>
</feature>
<feature type="active site" evidence="2 9">
    <location>
        <position position="244"/>
    </location>
</feature>
<feature type="binding site" evidence="2">
    <location>
        <begin position="178"/>
        <end position="179"/>
    </location>
    <ligand>
        <name>NAD(+)</name>
        <dbReference type="ChEBI" id="CHEBI:57540"/>
    </ligand>
</feature>
<feature type="binding site" evidence="2">
    <location>
        <position position="208"/>
    </location>
    <ligand>
        <name>NAD(+)</name>
        <dbReference type="ChEBI" id="CHEBI:57540"/>
    </ligand>
</feature>
<feature type="mutagenesis site" description="Loss of NAD(+) hydrolase activity." evidence="6">
    <original>E</original>
    <variation>A</variation>
    <location>
        <position position="244"/>
    </location>
</feature>
<feature type="mutagenesis site" description="Decreased ability to suppress TLR-mediated cytokine production in host." evidence="5">
    <location>
        <begin position="272"/>
        <end position="275"/>
    </location>
</feature>
<evidence type="ECO:0000255" key="1"/>
<evidence type="ECO:0000255" key="2">
    <source>
        <dbReference type="PROSITE-ProRule" id="PRU00204"/>
    </source>
</evidence>
<evidence type="ECO:0000269" key="3">
    <source>
    </source>
</evidence>
<evidence type="ECO:0000269" key="4">
    <source>
    </source>
</evidence>
<evidence type="ECO:0000269" key="5">
    <source>
    </source>
</evidence>
<evidence type="ECO:0000269" key="6">
    <source>
    </source>
</evidence>
<evidence type="ECO:0000303" key="7">
    <source>
    </source>
</evidence>
<evidence type="ECO:0000305" key="8"/>
<evidence type="ECO:0000305" key="9">
    <source>
    </source>
</evidence>
<evidence type="ECO:0000312" key="10">
    <source>
        <dbReference type="EMBL" id="AAN80857.1"/>
    </source>
</evidence>
<organism>
    <name type="scientific">Escherichia coli O6:H1 (strain CFT073 / ATCC 700928 / UPEC)</name>
    <dbReference type="NCBI Taxonomy" id="199310"/>
    <lineage>
        <taxon>Bacteria</taxon>
        <taxon>Pseudomonadati</taxon>
        <taxon>Pseudomonadota</taxon>
        <taxon>Gammaproteobacteria</taxon>
        <taxon>Enterobacterales</taxon>
        <taxon>Enterobacteriaceae</taxon>
        <taxon>Escherichia</taxon>
    </lineage>
</organism>